<accession>P43352</accession>
<organism>
    <name type="scientific">Mus musculus</name>
    <name type="common">Mouse</name>
    <dbReference type="NCBI Taxonomy" id="10090"/>
    <lineage>
        <taxon>Eukaryota</taxon>
        <taxon>Metazoa</taxon>
        <taxon>Chordata</taxon>
        <taxon>Craniata</taxon>
        <taxon>Vertebrata</taxon>
        <taxon>Euteleostomi</taxon>
        <taxon>Mammalia</taxon>
        <taxon>Eutheria</taxon>
        <taxon>Euarchontoglires</taxon>
        <taxon>Glires</taxon>
        <taxon>Rodentia</taxon>
        <taxon>Myomorpha</taxon>
        <taxon>Muroidea</taxon>
        <taxon>Muridae</taxon>
        <taxon>Murinae</taxon>
        <taxon>Mus</taxon>
        <taxon>Mus</taxon>
    </lineage>
</organism>
<name>RAD52_MOUSE</name>
<protein>
    <recommendedName>
        <fullName>DNA repair protein RAD52 homolog</fullName>
    </recommendedName>
</protein>
<reference key="1">
    <citation type="journal article" date="1994" name="Genomics">
        <title>Identification of a mouse homologue of the Saccharomyces cerevisiae recombination and repair gene, RAD52.</title>
        <authorList>
            <person name="Bendixen C."/>
            <person name="Sunjevaric I."/>
            <person name="Bauchwitz R."/>
            <person name="Rothstein R."/>
        </authorList>
    </citation>
    <scope>NUCLEOTIDE SEQUENCE [MRNA]</scope>
    <source>
        <strain>C57BL/6J</strain>
    </source>
</reference>
<reference key="2">
    <citation type="journal article" date="1995" name="Genomics">
        <title>The human and mouse homologs of the yeast RAD52 gene: cDNA cloning, sequence analysis, assignment to human chromosome 12p12.2-p13, and mRNA expression in mouse tissues.</title>
        <authorList>
            <person name="Shen Z."/>
            <person name="Denison K."/>
            <person name="Lobb R."/>
            <person name="Gatewood J.M."/>
            <person name="Chen D.J."/>
        </authorList>
    </citation>
    <scope>NUCLEOTIDE SEQUENCE [MRNA]</scope>
    <source>
        <strain>C3H/HeJ</strain>
    </source>
</reference>
<reference key="3">
    <citation type="journal article" date="1994" name="Mutat. Res.">
        <title>Cloning of human and mouse genes homologous to RAD52, a yeast gene involved in DNA repair and recombination.</title>
        <authorList>
            <person name="Muris D.F."/>
            <person name="Bezzubova O."/>
            <person name="Buerstedde J.-M."/>
            <person name="Vreeken K."/>
            <person name="Balajee A.S."/>
            <person name="Osgood C.J."/>
            <person name="Troelstra C."/>
            <person name="Hoeijmakers J.H."/>
            <person name="Ostermann K."/>
            <person name="Schmidt H."/>
            <person name="Natarajan A.T."/>
            <person name="Eeken J.C.J."/>
            <person name="Lohman P.H.M."/>
            <person name="Pastink A."/>
        </authorList>
    </citation>
    <scope>NUCLEOTIDE SEQUENCE [MRNA]</scope>
    <source>
        <strain>C57BL/6 X CBA</strain>
        <tissue>Thymus</tissue>
    </source>
</reference>
<reference key="4">
    <citation type="submission" date="1997-09" db="EMBL/GenBank/DDBJ databases">
        <authorList>
            <person name="Sunjevaric I."/>
            <person name="Bendixen C."/>
            <person name="Mortensen U.H."/>
            <person name="Miljkovic V."/>
            <person name="Rothstein R."/>
        </authorList>
    </citation>
    <scope>NUCLEOTIDE SEQUENCE</scope>
    <source>
        <strain>C57BL/6J</strain>
    </source>
</reference>
<feature type="chain" id="PRO_0000173882" description="DNA repair protein RAD52 homolog">
    <location>
        <begin position="1"/>
        <end position="420"/>
    </location>
</feature>
<feature type="DNA-binding region" evidence="1">
    <location>
        <begin position="153"/>
        <end position="157"/>
    </location>
</feature>
<feature type="region of interest" description="Mediates interaction with RPA2" evidence="1">
    <location>
        <begin position="222"/>
        <end position="291"/>
    </location>
</feature>
<feature type="region of interest" description="Disordered" evidence="3">
    <location>
        <begin position="357"/>
        <end position="420"/>
    </location>
</feature>
<feature type="compositionally biased region" description="Polar residues" evidence="3">
    <location>
        <begin position="357"/>
        <end position="368"/>
    </location>
</feature>
<feature type="compositionally biased region" description="Basic and acidic residues" evidence="3">
    <location>
        <begin position="398"/>
        <end position="420"/>
    </location>
</feature>
<feature type="modified residue" description="Phosphotyrosine; by ABL1" evidence="2">
    <location>
        <position position="105"/>
    </location>
</feature>
<feature type="modified residue" description="Phosphoserine" evidence="2">
    <location>
        <position position="200"/>
    </location>
</feature>
<feature type="modified residue" description="Phosphothreonine" evidence="2">
    <location>
        <position position="339"/>
    </location>
</feature>
<feature type="sequence conflict" description="In Ref. 2; AAA85794." evidence="4" ref="2">
    <original>E</original>
    <variation>K</variation>
    <location>
        <position position="195"/>
    </location>
</feature>
<feature type="sequence conflict" description="In Ref. 2; AAA85794." evidence="4" ref="2">
    <location>
        <position position="300"/>
    </location>
</feature>
<feature type="sequence conflict" description="In Ref. 1 and 4." evidence="4" ref="1 4">
    <original>A</original>
    <variation>G</variation>
    <location>
        <position position="352"/>
    </location>
</feature>
<feature type="sequence conflict" description="In Ref. 1 and 4." evidence="4" ref="1 4">
    <location>
        <position position="401"/>
    </location>
</feature>
<feature type="sequence conflict" description="In Ref. 3; CAA83659." evidence="4" ref="3">
    <original>D</original>
    <variation>N</variation>
    <location>
        <position position="418"/>
    </location>
</feature>
<dbReference type="EMBL" id="U06837">
    <property type="protein sequence ID" value="AAA75441.1"/>
    <property type="molecule type" value="mRNA"/>
</dbReference>
<dbReference type="EMBL" id="U12135">
    <property type="protein sequence ID" value="AAA85794.1"/>
    <property type="molecule type" value="mRNA"/>
</dbReference>
<dbReference type="EMBL" id="Z32767">
    <property type="protein sequence ID" value="CAA83659.1"/>
    <property type="molecule type" value="mRNA"/>
</dbReference>
<dbReference type="EMBL" id="AF004854">
    <property type="protein sequence ID" value="AAB69174.1"/>
    <property type="molecule type" value="Genomic_DNA"/>
</dbReference>
<dbReference type="CCDS" id="CCDS51887.1"/>
<dbReference type="PIR" id="A55727">
    <property type="entry name" value="A55727"/>
</dbReference>
<dbReference type="PIR" id="A56529">
    <property type="entry name" value="A56529"/>
</dbReference>
<dbReference type="RefSeq" id="NP_001159853.1">
    <property type="nucleotide sequence ID" value="NM_001166381.2"/>
</dbReference>
<dbReference type="SMR" id="P43352"/>
<dbReference type="FunCoup" id="P43352">
    <property type="interactions" value="1547"/>
</dbReference>
<dbReference type="STRING" id="10090.ENSMUSP00000125502"/>
<dbReference type="GlyGen" id="P43352">
    <property type="glycosylation" value="1 site, 1 O-linked glycan (1 site)"/>
</dbReference>
<dbReference type="iPTMnet" id="P43352"/>
<dbReference type="PhosphoSitePlus" id="P43352"/>
<dbReference type="PaxDb" id="10090-ENSMUSP00000125502"/>
<dbReference type="ProteomicsDB" id="255072"/>
<dbReference type="Antibodypedia" id="10276">
    <property type="antibodies" value="422 antibodies from 35 providers"/>
</dbReference>
<dbReference type="DNASU" id="19365"/>
<dbReference type="Ensembl" id="ENSMUST00000162461.7">
    <property type="protein sequence ID" value="ENSMUSP00000125502.2"/>
    <property type="gene ID" value="ENSMUSG00000030166.15"/>
</dbReference>
<dbReference type="GeneID" id="19365"/>
<dbReference type="KEGG" id="mmu:19365"/>
<dbReference type="UCSC" id="uc009dmq.2">
    <property type="organism name" value="mouse"/>
</dbReference>
<dbReference type="AGR" id="MGI:101949"/>
<dbReference type="CTD" id="5893"/>
<dbReference type="MGI" id="MGI:101949">
    <property type="gene designation" value="Rad52"/>
</dbReference>
<dbReference type="VEuPathDB" id="HostDB:ENSMUSG00000030166"/>
<dbReference type="eggNOG" id="KOG4141">
    <property type="taxonomic scope" value="Eukaryota"/>
</dbReference>
<dbReference type="GeneTree" id="ENSGT00390000008766"/>
<dbReference type="InParanoid" id="P43352"/>
<dbReference type="OrthoDB" id="206565at2759"/>
<dbReference type="PhylomeDB" id="P43352"/>
<dbReference type="TreeFam" id="TF101221"/>
<dbReference type="Reactome" id="R-MMU-3108214">
    <property type="pathway name" value="SUMOylation of DNA damage response and repair proteins"/>
</dbReference>
<dbReference type="Reactome" id="R-MMU-5685938">
    <property type="pathway name" value="HDR through Single Strand Annealing (SSA)"/>
</dbReference>
<dbReference type="Reactome" id="R-MMU-5685939">
    <property type="pathway name" value="HDR through MMEJ (alt-NHEJ)"/>
</dbReference>
<dbReference type="BioGRID-ORCS" id="19365">
    <property type="hits" value="7 hits in 115 CRISPR screens"/>
</dbReference>
<dbReference type="PRO" id="PR:P43352"/>
<dbReference type="Proteomes" id="UP000000589">
    <property type="component" value="Chromosome 6"/>
</dbReference>
<dbReference type="RNAct" id="P43352">
    <property type="molecule type" value="protein"/>
</dbReference>
<dbReference type="Bgee" id="ENSMUSG00000030166">
    <property type="expression patterns" value="Expressed in ascending aorta and 235 other cell types or tissues"/>
</dbReference>
<dbReference type="ExpressionAtlas" id="P43352">
    <property type="expression patterns" value="baseline and differential"/>
</dbReference>
<dbReference type="GO" id="GO:0005634">
    <property type="term" value="C:nucleus"/>
    <property type="evidence" value="ECO:0000266"/>
    <property type="project" value="MGI"/>
</dbReference>
<dbReference type="GO" id="GO:0032991">
    <property type="term" value="C:protein-containing complex"/>
    <property type="evidence" value="ECO:0000266"/>
    <property type="project" value="MGI"/>
</dbReference>
<dbReference type="GO" id="GO:0032993">
    <property type="term" value="C:protein-DNA complex"/>
    <property type="evidence" value="ECO:0007669"/>
    <property type="project" value="Ensembl"/>
</dbReference>
<dbReference type="GO" id="GO:0003677">
    <property type="term" value="F:DNA binding"/>
    <property type="evidence" value="ECO:0000266"/>
    <property type="project" value="MGI"/>
</dbReference>
<dbReference type="GO" id="GO:0042802">
    <property type="term" value="F:identical protein binding"/>
    <property type="evidence" value="ECO:0007669"/>
    <property type="project" value="Ensembl"/>
</dbReference>
<dbReference type="GO" id="GO:0003697">
    <property type="term" value="F:single-stranded DNA binding"/>
    <property type="evidence" value="ECO:0007669"/>
    <property type="project" value="Ensembl"/>
</dbReference>
<dbReference type="GO" id="GO:0034599">
    <property type="term" value="P:cellular response to oxidative stress"/>
    <property type="evidence" value="ECO:0000314"/>
    <property type="project" value="MGI"/>
</dbReference>
<dbReference type="GO" id="GO:0006974">
    <property type="term" value="P:DNA damage response"/>
    <property type="evidence" value="ECO:0000266"/>
    <property type="project" value="MGI"/>
</dbReference>
<dbReference type="GO" id="GO:0010792">
    <property type="term" value="P:DNA double-strand break processing involved in repair via single-strand annealing"/>
    <property type="evidence" value="ECO:0000315"/>
    <property type="project" value="CACAO"/>
</dbReference>
<dbReference type="GO" id="GO:0000730">
    <property type="term" value="P:DNA recombinase assembly"/>
    <property type="evidence" value="ECO:0007669"/>
    <property type="project" value="InterPro"/>
</dbReference>
<dbReference type="GO" id="GO:0006310">
    <property type="term" value="P:DNA recombination"/>
    <property type="evidence" value="ECO:0000250"/>
    <property type="project" value="UniProtKB"/>
</dbReference>
<dbReference type="GO" id="GO:0000724">
    <property type="term" value="P:double-strand break repair via homologous recombination"/>
    <property type="evidence" value="ECO:0000314"/>
    <property type="project" value="MGI"/>
</dbReference>
<dbReference type="GO" id="GO:2000819">
    <property type="term" value="P:regulation of nucleotide-excision repair"/>
    <property type="evidence" value="ECO:0000266"/>
    <property type="project" value="MGI"/>
</dbReference>
<dbReference type="FunFam" id="3.30.390.80:FF:000001">
    <property type="entry name" value="DNA repair protein RAD52 homolog"/>
    <property type="match status" value="1"/>
</dbReference>
<dbReference type="Gene3D" id="3.30.390.80">
    <property type="entry name" value="DNA repair protein Rad52/59/22"/>
    <property type="match status" value="1"/>
</dbReference>
<dbReference type="InterPro" id="IPR004585">
    <property type="entry name" value="DNA_recomb/repair_Rad52"/>
</dbReference>
<dbReference type="InterPro" id="IPR041247">
    <property type="entry name" value="Rad52_fam"/>
</dbReference>
<dbReference type="InterPro" id="IPR007232">
    <property type="entry name" value="Rad52_Rad59_Rad22"/>
</dbReference>
<dbReference type="InterPro" id="IPR042525">
    <property type="entry name" value="Rad52_Rad59_Rad22_sf"/>
</dbReference>
<dbReference type="NCBIfam" id="TIGR00607">
    <property type="entry name" value="rad52"/>
    <property type="match status" value="1"/>
</dbReference>
<dbReference type="PANTHER" id="PTHR12132">
    <property type="entry name" value="DNA REPAIR AND RECOMBINATION PROTEIN RAD52, RAD59"/>
    <property type="match status" value="1"/>
</dbReference>
<dbReference type="PANTHER" id="PTHR12132:SF1">
    <property type="entry name" value="DNA REPAIR PROTEIN RAD52 HOMOLOG"/>
    <property type="match status" value="1"/>
</dbReference>
<dbReference type="Pfam" id="PF04098">
    <property type="entry name" value="Rad52_Rad22"/>
    <property type="match status" value="1"/>
</dbReference>
<dbReference type="SUPFAM" id="SSF54768">
    <property type="entry name" value="dsRNA-binding domain-like"/>
    <property type="match status" value="1"/>
</dbReference>
<keyword id="KW-0227">DNA damage</keyword>
<keyword id="KW-0233">DNA recombination</keyword>
<keyword id="KW-0234">DNA repair</keyword>
<keyword id="KW-0238">DNA-binding</keyword>
<keyword id="KW-0539">Nucleus</keyword>
<keyword id="KW-0597">Phosphoprotein</keyword>
<keyword id="KW-1185">Reference proteome</keyword>
<sequence length="420" mass="46910">MAGPEEAVHRGCDNHPPFVGGKSVLLFGQSQYTADEYQAIQKALRQRLGPEYISSRMAGGGQKVCYIEGHRVINLANEMFGYNGWAHSITQQNVDFVDLNNGKFYVGVCAFVKVQLKDGSYHEDVGYGVSEGLRSKALSLEKARKEAVTDGLKRALRSFGNALGNCILDKDYLRSLNKLPRQLPLDVDLTKTKREDFEPSVEQARYNSCRQNEALGLPKPQEVTSPCRSSPPHDSNIKLQGAKDISSSCSLAATLESDATHQRKLRKLRQKQLQQQFREQMETRRQSHAPAEEVAAKHAAVLPAPPKHSTPVTAASELLQEKVVFPDNLEENLEMWDLTPDLEDIIKPLCRAEPAQTSATRTFNNQDSVPHIHCHQKPQEKPGPGHLQTCNTNQHVLGSREDSEPHRKSQDLKKRKLDPS</sequence>
<comment type="function">
    <text evidence="2">Involved in double-stranded break repair. Plays a central role in genetic recombination and DNA repair by promoting the annealing of complementary single-stranded DNA and by stimulation of the RAD51 recombinase.</text>
</comment>
<comment type="subunit">
    <text evidence="2">The full-length protein forms heptameric rings. Interacts with ABL1. Interacts with RPA2; the interaction is direct and associates RAD52 with the RPA complex. Interacts with RAD51AP1.</text>
</comment>
<comment type="subcellular location">
    <subcellularLocation>
        <location evidence="4">Nucleus</location>
    </subcellularLocation>
</comment>
<comment type="PTM">
    <text evidence="2">Phosphorylated upon DNA damage by ABL1, and probably by ATM or ATR.</text>
</comment>
<comment type="similarity">
    <text evidence="4">Belongs to the RAD52 family.</text>
</comment>
<gene>
    <name type="primary">Rad52</name>
</gene>
<proteinExistence type="evidence at transcript level"/>
<evidence type="ECO:0000250" key="1"/>
<evidence type="ECO:0000250" key="2">
    <source>
        <dbReference type="UniProtKB" id="P43351"/>
    </source>
</evidence>
<evidence type="ECO:0000256" key="3">
    <source>
        <dbReference type="SAM" id="MobiDB-lite"/>
    </source>
</evidence>
<evidence type="ECO:0000305" key="4"/>